<accession>Q1RJR4</accession>
<gene>
    <name type="ordered locus">RBE_0319</name>
</gene>
<reference key="1">
    <citation type="journal article" date="2006" name="PLoS Genet.">
        <title>Genome sequence of Rickettsia bellii illuminates the role of amoebae in gene exchanges between intracellular pathogens.</title>
        <authorList>
            <person name="Ogata H."/>
            <person name="La Scola B."/>
            <person name="Audic S."/>
            <person name="Renesto P."/>
            <person name="Blanc G."/>
            <person name="Robert C."/>
            <person name="Fournier P.-E."/>
            <person name="Claverie J.-M."/>
            <person name="Raoult D."/>
        </authorList>
    </citation>
    <scope>NUCLEOTIDE SEQUENCE [LARGE SCALE GENOMIC DNA]</scope>
    <source>
        <strain>RML369-C</strain>
    </source>
</reference>
<keyword id="KW-0040">ANK repeat</keyword>
<keyword id="KW-0677">Repeat</keyword>
<organism>
    <name type="scientific">Rickettsia bellii (strain RML369-C)</name>
    <dbReference type="NCBI Taxonomy" id="336407"/>
    <lineage>
        <taxon>Bacteria</taxon>
        <taxon>Pseudomonadati</taxon>
        <taxon>Pseudomonadota</taxon>
        <taxon>Alphaproteobacteria</taxon>
        <taxon>Rickettsiales</taxon>
        <taxon>Rickettsiaceae</taxon>
        <taxon>Rickettsieae</taxon>
        <taxon>Rickettsia</taxon>
        <taxon>belli group</taxon>
    </lineage>
</organism>
<proteinExistence type="predicted"/>
<sequence length="719" mass="82952">MKEQDNLSISQELYGTILINLKSIVQNIFPLEYNKQEITISYIVEQIASSGSIQKNSDYPELDEEIEEINQAIIDYCKYKEIPKEEENNIYKKTSELIKDGFLKNIEQTTKLEPTTELEKKYLDKLNQATSSDEKKIIIDQHKLEIEAFNKQIAQDFQKKQEDLRGNREITNVEEHKLVKEGIVTKEEIEPYLSNYPLLNTLVEYIYLDDDQDIPLVKKLFEIARNFYPNNSTQELKELMELSYKKVNDLVGTNSSNILELLNHKQISFADINNVESEELHKINEIKIKSNFKILDCVISGDCRVTLKKLIETGKIESFDKKELELVVALFEKDADTLNKHQETKLSSKVGKLLLTFHASKAYKLDDLMQFINIIDVAEELLFTATYYQNINIIKQIIETKIEISSSTLIKALYINFTSDNKEILDYLLSFKGLNINEHDENGGTLLDYAITFNKLDIVKKLLSHENIEVNKKNIYGFTILEQAINDDKLEIVKLLLSCKSLEINQKNQYQTTPLQQAINGDKLEIVKLLLSHPDIKFNEKDQLGYTSLDWVIICNKLEIFKVLMPHLDINQKNQDGYTPLEWSIYNSYEVFQTLLLRPDINVNEENQHGLTPLQLAIIDHNDQMIQALLSHKNIEVSEKNQYGTPLELVINNSNDTALKLLLSHPKINLNKTEIAEILRLHEAKLKEEVQDDSVPISNIELDTSVLGGLEEDQESYGL</sequence>
<name>Y319_RICBR</name>
<feature type="chain" id="PRO_0000280908" description="Putative ankyrin repeat protein RBE_0319">
    <location>
        <begin position="1"/>
        <end position="719"/>
    </location>
</feature>
<feature type="repeat" description="ANK 1">
    <location>
        <begin position="377"/>
        <end position="406"/>
    </location>
</feature>
<feature type="repeat" description="ANK 2">
    <location>
        <begin position="408"/>
        <end position="438"/>
    </location>
</feature>
<feature type="repeat" description="ANK 3">
    <location>
        <begin position="442"/>
        <end position="472"/>
    </location>
</feature>
<feature type="repeat" description="ANK 4">
    <location>
        <begin position="476"/>
        <end position="506"/>
    </location>
</feature>
<feature type="repeat" description="ANK 5">
    <location>
        <begin position="510"/>
        <end position="540"/>
    </location>
</feature>
<feature type="repeat" description="ANK 6">
    <location>
        <begin position="544"/>
        <end position="572"/>
    </location>
</feature>
<feature type="repeat" description="ANK 7">
    <location>
        <begin position="576"/>
        <end position="605"/>
    </location>
</feature>
<feature type="repeat" description="ANK 8">
    <location>
        <begin position="609"/>
        <end position="639"/>
    </location>
</feature>
<feature type="repeat" description="ANK 9">
    <location>
        <begin position="642"/>
        <end position="672"/>
    </location>
</feature>
<protein>
    <recommendedName>
        <fullName>Putative ankyrin repeat protein RBE_0319</fullName>
    </recommendedName>
</protein>
<dbReference type="EMBL" id="CP000087">
    <property type="protein sequence ID" value="ABE04400.1"/>
    <property type="molecule type" value="Genomic_DNA"/>
</dbReference>
<dbReference type="RefSeq" id="WP_011477011.1">
    <property type="nucleotide sequence ID" value="NC_007940.1"/>
</dbReference>
<dbReference type="SMR" id="Q1RJR4"/>
<dbReference type="KEGG" id="rbe:RBE_0319"/>
<dbReference type="eggNOG" id="COG0666">
    <property type="taxonomic scope" value="Bacteria"/>
</dbReference>
<dbReference type="HOGENOM" id="CLU_384449_0_0_5"/>
<dbReference type="OrthoDB" id="7162240at2"/>
<dbReference type="Proteomes" id="UP000001951">
    <property type="component" value="Chromosome"/>
</dbReference>
<dbReference type="GO" id="GO:0003723">
    <property type="term" value="F:RNA binding"/>
    <property type="evidence" value="ECO:0007669"/>
    <property type="project" value="TreeGrafter"/>
</dbReference>
<dbReference type="GO" id="GO:0004540">
    <property type="term" value="F:RNA nuclease activity"/>
    <property type="evidence" value="ECO:0007669"/>
    <property type="project" value="TreeGrafter"/>
</dbReference>
<dbReference type="GO" id="GO:0006396">
    <property type="term" value="P:RNA processing"/>
    <property type="evidence" value="ECO:0007669"/>
    <property type="project" value="TreeGrafter"/>
</dbReference>
<dbReference type="Gene3D" id="1.25.40.20">
    <property type="entry name" value="Ankyrin repeat-containing domain"/>
    <property type="match status" value="1"/>
</dbReference>
<dbReference type="InterPro" id="IPR002110">
    <property type="entry name" value="Ankyrin_rpt"/>
</dbReference>
<dbReference type="InterPro" id="IPR036770">
    <property type="entry name" value="Ankyrin_rpt-contain_sf"/>
</dbReference>
<dbReference type="PANTHER" id="PTHR24141">
    <property type="entry name" value="2-5A-DEPENDENT RIBONUCLEASE"/>
    <property type="match status" value="1"/>
</dbReference>
<dbReference type="PANTHER" id="PTHR24141:SF1">
    <property type="entry name" value="2-5A-DEPENDENT RIBONUCLEASE"/>
    <property type="match status" value="1"/>
</dbReference>
<dbReference type="Pfam" id="PF12796">
    <property type="entry name" value="Ank_2"/>
    <property type="match status" value="2"/>
</dbReference>
<dbReference type="Pfam" id="PF13637">
    <property type="entry name" value="Ank_4"/>
    <property type="match status" value="1"/>
</dbReference>
<dbReference type="SMART" id="SM00248">
    <property type="entry name" value="ANK"/>
    <property type="match status" value="9"/>
</dbReference>
<dbReference type="SUPFAM" id="SSF48403">
    <property type="entry name" value="Ankyrin repeat"/>
    <property type="match status" value="1"/>
</dbReference>
<dbReference type="PROSITE" id="PS50297">
    <property type="entry name" value="ANK_REP_REGION"/>
    <property type="match status" value="1"/>
</dbReference>